<name>1001R_ASFWA</name>
<feature type="chain" id="PRO_0000373169" description="Protein MGF 100-1R">
    <location>
        <begin position="1"/>
        <end position="124"/>
    </location>
</feature>
<protein>
    <recommendedName>
        <fullName>Protein MGF 100-1R</fullName>
    </recommendedName>
</protein>
<proteinExistence type="inferred from homology"/>
<reference key="1">
    <citation type="submission" date="2003-03" db="EMBL/GenBank/DDBJ databases">
        <title>African swine fever virus genomes.</title>
        <authorList>
            <person name="Kutish G.F."/>
            <person name="Rock D.L."/>
        </authorList>
    </citation>
    <scope>NUCLEOTIDE SEQUENCE [LARGE SCALE GENOMIC DNA]</scope>
</reference>
<sequence>MVRLFRNPIKCIFYRRSRKIQEKKLRKSLKKLNFYHPPEDCCQIYRLLENVPGGTYFITENMTNDLIMVVKDSVDKKIKSIKLYLHGSYIKIHQHYYINIYMYLMRYTQIYKYPLICFNKYYNI</sequence>
<gene>
    <name type="ordered locus">War-018</name>
</gene>
<evidence type="ECO:0000250" key="1"/>
<evidence type="ECO:0000305" key="2"/>
<dbReference type="EMBL" id="AY261366">
    <property type="status" value="NOT_ANNOTATED_CDS"/>
    <property type="molecule type" value="Genomic_DNA"/>
</dbReference>
<dbReference type="SMR" id="P0C9E9"/>
<dbReference type="Proteomes" id="UP000000858">
    <property type="component" value="Segment"/>
</dbReference>
<organismHost>
    <name type="scientific">Ornithodoros</name>
    <name type="common">relapsing fever ticks</name>
    <dbReference type="NCBI Taxonomy" id="6937"/>
</organismHost>
<organismHost>
    <name type="scientific">Phacochoerus aethiopicus</name>
    <name type="common">Warthog</name>
    <dbReference type="NCBI Taxonomy" id="85517"/>
</organismHost>
<organismHost>
    <name type="scientific">Phacochoerus africanus</name>
    <name type="common">Warthog</name>
    <dbReference type="NCBI Taxonomy" id="41426"/>
</organismHost>
<organismHost>
    <name type="scientific">Potamochoerus larvatus</name>
    <name type="common">Bushpig</name>
    <dbReference type="NCBI Taxonomy" id="273792"/>
</organismHost>
<organismHost>
    <name type="scientific">Sus scrofa</name>
    <name type="common">Pig</name>
    <dbReference type="NCBI Taxonomy" id="9823"/>
</organismHost>
<comment type="function">
    <text evidence="1">Plays a role in virus cell tropism, and may be required for efficient virus replication in macrophages.</text>
</comment>
<comment type="similarity">
    <text evidence="2">Belongs to the asfivirus MGF 100 family.</text>
</comment>
<organism>
    <name type="scientific">African swine fever virus (isolate Warthog/Namibia/Wart80/1980)</name>
    <name type="common">ASFV</name>
    <dbReference type="NCBI Taxonomy" id="561444"/>
    <lineage>
        <taxon>Viruses</taxon>
        <taxon>Varidnaviria</taxon>
        <taxon>Bamfordvirae</taxon>
        <taxon>Nucleocytoviricota</taxon>
        <taxon>Pokkesviricetes</taxon>
        <taxon>Asfuvirales</taxon>
        <taxon>Asfarviridae</taxon>
        <taxon>Asfivirus</taxon>
        <taxon>African swine fever virus</taxon>
    </lineage>
</organism>
<accession>P0C9E9</accession>